<dbReference type="EMBL" id="CH473973">
    <property type="protein sequence ID" value="EDM13466.1"/>
    <property type="molecule type" value="Genomic_DNA"/>
</dbReference>
<dbReference type="EMBL" id="BC162055">
    <property type="protein sequence ID" value="AAI62055.1"/>
    <property type="molecule type" value="mRNA"/>
</dbReference>
<dbReference type="RefSeq" id="NP_001121666.1">
    <property type="nucleotide sequence ID" value="NM_001128194.2"/>
</dbReference>
<dbReference type="SMR" id="B1WC97"/>
<dbReference type="FunCoup" id="B1WC97">
    <property type="interactions" value="1476"/>
</dbReference>
<dbReference type="STRING" id="10116.ENSRNOP00000001198"/>
<dbReference type="iPTMnet" id="B1WC97"/>
<dbReference type="PhosphoSitePlus" id="B1WC97"/>
<dbReference type="PaxDb" id="10116-ENSRNOP00000001198"/>
<dbReference type="Ensembl" id="ENSRNOT00000001198.5">
    <property type="protein sequence ID" value="ENSRNOP00000001198.3"/>
    <property type="gene ID" value="ENSRNOG00000042384.2"/>
</dbReference>
<dbReference type="GeneID" id="688993"/>
<dbReference type="KEGG" id="rno:688993"/>
<dbReference type="AGR" id="RGD:1582914"/>
<dbReference type="CTD" id="154881"/>
<dbReference type="RGD" id="1582914">
    <property type="gene designation" value="Kctd7"/>
</dbReference>
<dbReference type="eggNOG" id="KOG2723">
    <property type="taxonomic scope" value="Eukaryota"/>
</dbReference>
<dbReference type="GeneTree" id="ENSGT00940000161327"/>
<dbReference type="HOGENOM" id="CLU_070345_1_0_1"/>
<dbReference type="InParanoid" id="B1WC97"/>
<dbReference type="OMA" id="IAAEQQC"/>
<dbReference type="OrthoDB" id="2414723at2759"/>
<dbReference type="PhylomeDB" id="B1WC97"/>
<dbReference type="TreeFam" id="TF315332"/>
<dbReference type="Reactome" id="R-RNO-8951664">
    <property type="pathway name" value="Neddylation"/>
</dbReference>
<dbReference type="Reactome" id="R-RNO-983168">
    <property type="pathway name" value="Antigen processing: Ubiquitination &amp; Proteasome degradation"/>
</dbReference>
<dbReference type="PRO" id="PR:B1WC97"/>
<dbReference type="Proteomes" id="UP000002494">
    <property type="component" value="Chromosome 12"/>
</dbReference>
<dbReference type="Proteomes" id="UP000234681">
    <property type="component" value="Chromosome 12"/>
</dbReference>
<dbReference type="Bgee" id="ENSRNOG00000042384">
    <property type="expression patterns" value="Expressed in testis and 20 other cell types or tissues"/>
</dbReference>
<dbReference type="GO" id="GO:0005737">
    <property type="term" value="C:cytoplasm"/>
    <property type="evidence" value="ECO:0000266"/>
    <property type="project" value="RGD"/>
</dbReference>
<dbReference type="GO" id="GO:0005829">
    <property type="term" value="C:cytosol"/>
    <property type="evidence" value="ECO:0007669"/>
    <property type="project" value="UniProtKB-SubCell"/>
</dbReference>
<dbReference type="GO" id="GO:0005886">
    <property type="term" value="C:plasma membrane"/>
    <property type="evidence" value="ECO:0000266"/>
    <property type="project" value="RGD"/>
</dbReference>
<dbReference type="GO" id="GO:0090461">
    <property type="term" value="P:intracellular glutamate homeostasis"/>
    <property type="evidence" value="ECO:0000266"/>
    <property type="project" value="RGD"/>
</dbReference>
<dbReference type="GO" id="GO:0030007">
    <property type="term" value="P:intracellular potassium ion homeostasis"/>
    <property type="evidence" value="ECO:0000266"/>
    <property type="project" value="RGD"/>
</dbReference>
<dbReference type="GO" id="GO:0060081">
    <property type="term" value="P:membrane hyperpolarization"/>
    <property type="evidence" value="ECO:0000266"/>
    <property type="project" value="RGD"/>
</dbReference>
<dbReference type="GO" id="GO:0051260">
    <property type="term" value="P:protein homooligomerization"/>
    <property type="evidence" value="ECO:0007669"/>
    <property type="project" value="InterPro"/>
</dbReference>
<dbReference type="CDD" id="cd18366">
    <property type="entry name" value="BTB_POZ_KCTD7"/>
    <property type="match status" value="1"/>
</dbReference>
<dbReference type="FunFam" id="3.30.710.10:FF:000046">
    <property type="entry name" value="BTB/POZ domain-containing protein KCTD7 isoform X1"/>
    <property type="match status" value="1"/>
</dbReference>
<dbReference type="Gene3D" id="3.30.710.10">
    <property type="entry name" value="Potassium Channel Kv1.1, Chain A"/>
    <property type="match status" value="1"/>
</dbReference>
<dbReference type="InterPro" id="IPR000210">
    <property type="entry name" value="BTB/POZ_dom"/>
</dbReference>
<dbReference type="InterPro" id="IPR011333">
    <property type="entry name" value="SKP1/BTB/POZ_sf"/>
</dbReference>
<dbReference type="InterPro" id="IPR003131">
    <property type="entry name" value="T1-type_BTB"/>
</dbReference>
<dbReference type="PANTHER" id="PTHR14499:SF122">
    <property type="entry name" value="BTB_POZ DOMAIN-CONTAINING PROTEIN KCTD7"/>
    <property type="match status" value="1"/>
</dbReference>
<dbReference type="PANTHER" id="PTHR14499">
    <property type="entry name" value="POTASSIUM CHANNEL TETRAMERIZATION DOMAIN-CONTAINING"/>
    <property type="match status" value="1"/>
</dbReference>
<dbReference type="Pfam" id="PF02214">
    <property type="entry name" value="BTB_2"/>
    <property type="match status" value="1"/>
</dbReference>
<dbReference type="SMART" id="SM00225">
    <property type="entry name" value="BTB"/>
    <property type="match status" value="1"/>
</dbReference>
<dbReference type="SUPFAM" id="SSF54695">
    <property type="entry name" value="POZ domain"/>
    <property type="match status" value="1"/>
</dbReference>
<protein>
    <recommendedName>
        <fullName>BTB/POZ domain-containing protein KCTD7</fullName>
    </recommendedName>
</protein>
<accession>B1WC97</accession>
<proteinExistence type="evidence at transcript level"/>
<keyword id="KW-1003">Cell membrane</keyword>
<keyword id="KW-0963">Cytoplasm</keyword>
<keyword id="KW-0472">Membrane</keyword>
<keyword id="KW-1185">Reference proteome</keyword>
<gene>
    <name type="primary">Kctd7</name>
</gene>
<reference key="1">
    <citation type="submission" date="2005-07" db="EMBL/GenBank/DDBJ databases">
        <authorList>
            <person name="Mural R.J."/>
            <person name="Adams M.D."/>
            <person name="Myers E.W."/>
            <person name="Smith H.O."/>
            <person name="Venter J.C."/>
        </authorList>
    </citation>
    <scope>NUCLEOTIDE SEQUENCE [LARGE SCALE GENOMIC DNA]</scope>
    <source>
        <strain>Brown Norway</strain>
    </source>
</reference>
<reference key="2">
    <citation type="journal article" date="2004" name="Genome Res.">
        <title>The status, quality, and expansion of the NIH full-length cDNA project: the Mammalian Gene Collection (MGC).</title>
        <authorList>
            <consortium name="The MGC Project Team"/>
        </authorList>
    </citation>
    <scope>NUCLEOTIDE SEQUENCE [LARGE SCALE MRNA]</scope>
    <source>
        <tissue>Testis</tissue>
    </source>
</reference>
<name>KCTD7_RAT</name>
<feature type="chain" id="PRO_0000369240" description="BTB/POZ domain-containing protein KCTD7">
    <location>
        <begin position="1"/>
        <end position="289"/>
    </location>
</feature>
<feature type="domain" description="BTB">
    <location>
        <begin position="53"/>
        <end position="141"/>
    </location>
</feature>
<feature type="region of interest" description="Disordered" evidence="2">
    <location>
        <begin position="1"/>
        <end position="42"/>
    </location>
</feature>
<sequence>MVVVNGREPDSRHSDGAMSSSEAEDDFLEPATPTATQAGHGLPLLPQEFPEVVPLNIGGAHFTTRLSTLRRYEDTMLAAMFSGRHYIPTDSEGRYFIDRDGTHFGDVLNFLRSGDLPPREHVRAVHKEAQYYAIGPLLEQLENMQPLKGEKVRQAFLGLMPYYKDHLERIVEIARLRAVQRKARFAKLKVCVFKEEMPITPYECPLLNSLRFERSESDGQLFEHHCEVDVSFGPWEAVADVYDLLHCLVTDLSAQGLTVDHQCIGVCDKHLVNHYYCKRPIYEFKITWW</sequence>
<organism>
    <name type="scientific">Rattus norvegicus</name>
    <name type="common">Rat</name>
    <dbReference type="NCBI Taxonomy" id="10116"/>
    <lineage>
        <taxon>Eukaryota</taxon>
        <taxon>Metazoa</taxon>
        <taxon>Chordata</taxon>
        <taxon>Craniata</taxon>
        <taxon>Vertebrata</taxon>
        <taxon>Euteleostomi</taxon>
        <taxon>Mammalia</taxon>
        <taxon>Eutheria</taxon>
        <taxon>Euarchontoglires</taxon>
        <taxon>Glires</taxon>
        <taxon>Rodentia</taxon>
        <taxon>Myomorpha</taxon>
        <taxon>Muroidea</taxon>
        <taxon>Muridae</taxon>
        <taxon>Murinae</taxon>
        <taxon>Rattus</taxon>
    </lineage>
</organism>
<comment type="function">
    <text evidence="1">May be involved in the control of excitability of cortical neurons.</text>
</comment>
<comment type="subunit">
    <text evidence="1">Interacts with CUL3.</text>
</comment>
<comment type="subcellular location">
    <subcellularLocation>
        <location evidence="1">Cell membrane</location>
    </subcellularLocation>
    <subcellularLocation>
        <location evidence="1">Cytoplasm</location>
        <location evidence="1">Cytosol</location>
    </subcellularLocation>
</comment>
<evidence type="ECO:0000250" key="1"/>
<evidence type="ECO:0000256" key="2">
    <source>
        <dbReference type="SAM" id="MobiDB-lite"/>
    </source>
</evidence>